<proteinExistence type="inferred from homology"/>
<sequence length="86" mass="9854">MRKDIHPDYRPVVFLDTTTGYQFLSGSTKASKETVEFEGETYPLIRVEISSDSHPFYTGRQKFTQADGRVDRFNKKYGLKDANAAK</sequence>
<name>RL31B_STRPM</name>
<accession>Q48UG8</accession>
<gene>
    <name evidence="1" type="primary">rpmE2</name>
    <name type="ordered locus">M28_Spy0524</name>
</gene>
<reference key="1">
    <citation type="journal article" date="2005" name="J. Infect. Dis.">
        <title>Genome sequence of a serotype M28 strain of group A Streptococcus: potential new insights into puerperal sepsis and bacterial disease specificity.</title>
        <authorList>
            <person name="Green N.M."/>
            <person name="Zhang S."/>
            <person name="Porcella S.F."/>
            <person name="Nagiec M.J."/>
            <person name="Barbian K.D."/>
            <person name="Beres S.B."/>
            <person name="Lefebvre R.B."/>
            <person name="Musser J.M."/>
        </authorList>
    </citation>
    <scope>NUCLEOTIDE SEQUENCE [LARGE SCALE GENOMIC DNA]</scope>
    <source>
        <strain>MGAS6180</strain>
    </source>
</reference>
<organism>
    <name type="scientific">Streptococcus pyogenes serotype M28 (strain MGAS6180)</name>
    <dbReference type="NCBI Taxonomy" id="319701"/>
    <lineage>
        <taxon>Bacteria</taxon>
        <taxon>Bacillati</taxon>
        <taxon>Bacillota</taxon>
        <taxon>Bacilli</taxon>
        <taxon>Lactobacillales</taxon>
        <taxon>Streptococcaceae</taxon>
        <taxon>Streptococcus</taxon>
    </lineage>
</organism>
<keyword id="KW-0687">Ribonucleoprotein</keyword>
<keyword id="KW-0689">Ribosomal protein</keyword>
<dbReference type="EMBL" id="CP000056">
    <property type="protein sequence ID" value="AAX71638.1"/>
    <property type="molecule type" value="Genomic_DNA"/>
</dbReference>
<dbReference type="RefSeq" id="WP_002985307.1">
    <property type="nucleotide sequence ID" value="NC_007296.2"/>
</dbReference>
<dbReference type="SMR" id="Q48UG8"/>
<dbReference type="KEGG" id="spb:M28_Spy0524"/>
<dbReference type="HOGENOM" id="CLU_114306_2_1_9"/>
<dbReference type="GO" id="GO:1990904">
    <property type="term" value="C:ribonucleoprotein complex"/>
    <property type="evidence" value="ECO:0007669"/>
    <property type="project" value="UniProtKB-KW"/>
</dbReference>
<dbReference type="GO" id="GO:0005840">
    <property type="term" value="C:ribosome"/>
    <property type="evidence" value="ECO:0007669"/>
    <property type="project" value="UniProtKB-KW"/>
</dbReference>
<dbReference type="GO" id="GO:0003735">
    <property type="term" value="F:structural constituent of ribosome"/>
    <property type="evidence" value="ECO:0007669"/>
    <property type="project" value="InterPro"/>
</dbReference>
<dbReference type="GO" id="GO:0006412">
    <property type="term" value="P:translation"/>
    <property type="evidence" value="ECO:0007669"/>
    <property type="project" value="UniProtKB-UniRule"/>
</dbReference>
<dbReference type="Gene3D" id="4.10.830.30">
    <property type="entry name" value="Ribosomal protein L31"/>
    <property type="match status" value="1"/>
</dbReference>
<dbReference type="HAMAP" id="MF_00502">
    <property type="entry name" value="Ribosomal_bL31_2"/>
    <property type="match status" value="1"/>
</dbReference>
<dbReference type="InterPro" id="IPR034704">
    <property type="entry name" value="Ribosomal_bL28/bL31-like_sf"/>
</dbReference>
<dbReference type="InterPro" id="IPR002150">
    <property type="entry name" value="Ribosomal_bL31"/>
</dbReference>
<dbReference type="InterPro" id="IPR027493">
    <property type="entry name" value="Ribosomal_bL31_B"/>
</dbReference>
<dbReference type="InterPro" id="IPR042105">
    <property type="entry name" value="Ribosomal_bL31_sf"/>
</dbReference>
<dbReference type="NCBIfam" id="TIGR00105">
    <property type="entry name" value="L31"/>
    <property type="match status" value="1"/>
</dbReference>
<dbReference type="NCBIfam" id="NF002462">
    <property type="entry name" value="PRK01678.1"/>
    <property type="match status" value="1"/>
</dbReference>
<dbReference type="PANTHER" id="PTHR33280">
    <property type="entry name" value="50S RIBOSOMAL PROTEIN L31, CHLOROPLASTIC"/>
    <property type="match status" value="1"/>
</dbReference>
<dbReference type="PANTHER" id="PTHR33280:SF1">
    <property type="entry name" value="LARGE RIBOSOMAL SUBUNIT PROTEIN BL31C"/>
    <property type="match status" value="1"/>
</dbReference>
<dbReference type="Pfam" id="PF01197">
    <property type="entry name" value="Ribosomal_L31"/>
    <property type="match status" value="1"/>
</dbReference>
<dbReference type="PRINTS" id="PR01249">
    <property type="entry name" value="RIBOSOMALL31"/>
</dbReference>
<dbReference type="SUPFAM" id="SSF143800">
    <property type="entry name" value="L28p-like"/>
    <property type="match status" value="1"/>
</dbReference>
<dbReference type="PROSITE" id="PS01143">
    <property type="entry name" value="RIBOSOMAL_L31"/>
    <property type="match status" value="1"/>
</dbReference>
<feature type="chain" id="PRO_0000259129" description="Large ribosomal subunit protein bL31B">
    <location>
        <begin position="1"/>
        <end position="86"/>
    </location>
</feature>
<comment type="subunit">
    <text evidence="1">Part of the 50S ribosomal subunit.</text>
</comment>
<comment type="similarity">
    <text evidence="1">Belongs to the bacterial ribosomal protein bL31 family. Type B subfamily.</text>
</comment>
<protein>
    <recommendedName>
        <fullName evidence="1">Large ribosomal subunit protein bL31B</fullName>
    </recommendedName>
    <alternativeName>
        <fullName evidence="2">50S ribosomal protein L31 type B</fullName>
    </alternativeName>
</protein>
<evidence type="ECO:0000255" key="1">
    <source>
        <dbReference type="HAMAP-Rule" id="MF_00502"/>
    </source>
</evidence>
<evidence type="ECO:0000305" key="2"/>